<gene>
    <name type="primary">yqfB</name>
    <name type="ordered locus">ECP_2894</name>
</gene>
<protein>
    <recommendedName>
        <fullName evidence="2">N(4)-acetylcytidine amidohydrolase</fullName>
        <shortName evidence="2">ac4C amidohydrolase</shortName>
        <ecNumber evidence="2">3.5.1.135</ecNumber>
    </recommendedName>
</protein>
<dbReference type="EC" id="3.5.1.135" evidence="2"/>
<dbReference type="EMBL" id="CP000247">
    <property type="protein sequence ID" value="ABG70878.1"/>
    <property type="molecule type" value="Genomic_DNA"/>
</dbReference>
<dbReference type="RefSeq" id="WP_001182956.1">
    <property type="nucleotide sequence ID" value="NC_008253.1"/>
</dbReference>
<dbReference type="SMR" id="Q0TDV1"/>
<dbReference type="KEGG" id="ecp:ECP_2894"/>
<dbReference type="HOGENOM" id="CLU_152586_0_0_6"/>
<dbReference type="Proteomes" id="UP000009182">
    <property type="component" value="Chromosome"/>
</dbReference>
<dbReference type="GO" id="GO:0005829">
    <property type="term" value="C:cytosol"/>
    <property type="evidence" value="ECO:0007669"/>
    <property type="project" value="TreeGrafter"/>
</dbReference>
<dbReference type="GO" id="GO:0016813">
    <property type="term" value="F:hydrolase activity, acting on carbon-nitrogen (but not peptide) bonds, in linear amidines"/>
    <property type="evidence" value="ECO:0007669"/>
    <property type="project" value="UniProtKB-UniRule"/>
</dbReference>
<dbReference type="GO" id="GO:0106251">
    <property type="term" value="F:N4-acetylcytidine amidohydrolase activity"/>
    <property type="evidence" value="ECO:0007669"/>
    <property type="project" value="RHEA"/>
</dbReference>
<dbReference type="CDD" id="cd06552">
    <property type="entry name" value="ASCH_yqfb_like"/>
    <property type="match status" value="1"/>
</dbReference>
<dbReference type="FunFam" id="2.30.130.30:FF:000001">
    <property type="entry name" value="UPF0267 protein YqfB"/>
    <property type="match status" value="1"/>
</dbReference>
<dbReference type="Gene3D" id="2.30.130.30">
    <property type="entry name" value="Hypothetical protein"/>
    <property type="match status" value="1"/>
</dbReference>
<dbReference type="HAMAP" id="MF_00684">
    <property type="entry name" value="ac4C_amidohydr"/>
    <property type="match status" value="1"/>
</dbReference>
<dbReference type="InterPro" id="IPR008314">
    <property type="entry name" value="AC4CH"/>
</dbReference>
<dbReference type="InterPro" id="IPR007374">
    <property type="entry name" value="ASCH_domain"/>
</dbReference>
<dbReference type="InterPro" id="IPR015947">
    <property type="entry name" value="PUA-like_sf"/>
</dbReference>
<dbReference type="NCBIfam" id="NF003443">
    <property type="entry name" value="PRK04980.1"/>
    <property type="match status" value="1"/>
</dbReference>
<dbReference type="PANTHER" id="PTHR38088">
    <property type="entry name" value="UCP029143 FAMILY PROTEIN"/>
    <property type="match status" value="1"/>
</dbReference>
<dbReference type="PANTHER" id="PTHR38088:SF2">
    <property type="entry name" value="UCP029143 FAMILY PROTEIN"/>
    <property type="match status" value="1"/>
</dbReference>
<dbReference type="Pfam" id="PF04266">
    <property type="entry name" value="ASCH"/>
    <property type="match status" value="1"/>
</dbReference>
<dbReference type="PIRSF" id="PIRSF029143">
    <property type="entry name" value="UCP029143"/>
    <property type="match status" value="1"/>
</dbReference>
<dbReference type="SMART" id="SM01022">
    <property type="entry name" value="ASCH"/>
    <property type="match status" value="1"/>
</dbReference>
<dbReference type="SUPFAM" id="SSF88697">
    <property type="entry name" value="PUA domain-like"/>
    <property type="match status" value="1"/>
</dbReference>
<feature type="chain" id="PRO_1000044946" description="N(4)-acetylcytidine amidohydrolase">
    <location>
        <begin position="1"/>
        <end position="103"/>
    </location>
</feature>
<feature type="domain" description="ASCH" evidence="1">
    <location>
        <begin position="6"/>
        <end position="101"/>
    </location>
</feature>
<feature type="active site" description="Proton acceptor" evidence="2">
    <location>
        <position position="21"/>
    </location>
</feature>
<feature type="active site" description="Nucleophile" evidence="2">
    <location>
        <position position="24"/>
    </location>
</feature>
<feature type="active site" description="Proton donor" evidence="2">
    <location>
        <position position="74"/>
    </location>
</feature>
<accession>Q0TDV1</accession>
<name>AC4CH_ECOL5</name>
<sequence>MQPNDITFFQRFQDDILAGRKTITIRDESESHFKTGDVLRVGRFEDDGYFCTIEVTATSTVTLDTLTEKHAEQENMTLTELKKVIADIYPDQTQFYVIEFKCL</sequence>
<evidence type="ECO:0000255" key="1"/>
<evidence type="ECO:0000255" key="2">
    <source>
        <dbReference type="HAMAP-Rule" id="MF_00684"/>
    </source>
</evidence>
<proteinExistence type="inferred from homology"/>
<comment type="function">
    <text evidence="2">Catalyzes the hydrolysis of N(4)-acetylcytidine (ac4C).</text>
</comment>
<comment type="catalytic activity">
    <reaction evidence="2">
        <text>N(4)-acetylcytidine + H2O = cytidine + acetate + H(+)</text>
        <dbReference type="Rhea" id="RHEA:62932"/>
        <dbReference type="ChEBI" id="CHEBI:15377"/>
        <dbReference type="ChEBI" id="CHEBI:15378"/>
        <dbReference type="ChEBI" id="CHEBI:17562"/>
        <dbReference type="ChEBI" id="CHEBI:30089"/>
        <dbReference type="ChEBI" id="CHEBI:70989"/>
        <dbReference type="EC" id="3.5.1.135"/>
    </reaction>
</comment>
<comment type="catalytic activity">
    <reaction evidence="2">
        <text>N(4)-acetyl-2'-deoxycytidine + H2O = 2'-deoxycytidine + acetate + H(+)</text>
        <dbReference type="Rhea" id="RHEA:62936"/>
        <dbReference type="ChEBI" id="CHEBI:15377"/>
        <dbReference type="ChEBI" id="CHEBI:15378"/>
        <dbReference type="ChEBI" id="CHEBI:15698"/>
        <dbReference type="ChEBI" id="CHEBI:30089"/>
        <dbReference type="ChEBI" id="CHEBI:146133"/>
        <dbReference type="EC" id="3.5.1.135"/>
    </reaction>
</comment>
<comment type="catalytic activity">
    <reaction evidence="2">
        <text>N(4)-acetylcytosine + H2O = cytosine + acetate + H(+)</text>
        <dbReference type="Rhea" id="RHEA:62940"/>
        <dbReference type="ChEBI" id="CHEBI:15377"/>
        <dbReference type="ChEBI" id="CHEBI:15378"/>
        <dbReference type="ChEBI" id="CHEBI:16040"/>
        <dbReference type="ChEBI" id="CHEBI:30089"/>
        <dbReference type="ChEBI" id="CHEBI:146134"/>
        <dbReference type="EC" id="3.5.1.135"/>
    </reaction>
</comment>
<comment type="similarity">
    <text evidence="2">Belongs to the N(4)-acetylcytidine amidohydrolase family.</text>
</comment>
<reference key="1">
    <citation type="journal article" date="2006" name="Mol. Microbiol.">
        <title>Role of pathogenicity island-associated integrases in the genome plasticity of uropathogenic Escherichia coli strain 536.</title>
        <authorList>
            <person name="Hochhut B."/>
            <person name="Wilde C."/>
            <person name="Balling G."/>
            <person name="Middendorf B."/>
            <person name="Dobrindt U."/>
            <person name="Brzuszkiewicz E."/>
            <person name="Gottschalk G."/>
            <person name="Carniel E."/>
            <person name="Hacker J."/>
        </authorList>
    </citation>
    <scope>NUCLEOTIDE SEQUENCE [LARGE SCALE GENOMIC DNA]</scope>
    <source>
        <strain>536 / UPEC</strain>
    </source>
</reference>
<organism>
    <name type="scientific">Escherichia coli O6:K15:H31 (strain 536 / UPEC)</name>
    <dbReference type="NCBI Taxonomy" id="362663"/>
    <lineage>
        <taxon>Bacteria</taxon>
        <taxon>Pseudomonadati</taxon>
        <taxon>Pseudomonadota</taxon>
        <taxon>Gammaproteobacteria</taxon>
        <taxon>Enterobacterales</taxon>
        <taxon>Enterobacteriaceae</taxon>
        <taxon>Escherichia</taxon>
    </lineage>
</organism>
<keyword id="KW-0378">Hydrolase</keyword>